<sequence length="136" mass="15355">MVKIRLKRAGRKKLPVYQIVVADARSPRDGKFLEVVGTYQPTAKPHAVTIKKDRIVYWMQTGAQPTATVNSLIRTTGLLYELRLKSMGRSEAEISAEMEKWQEHQAVRRQKRLALKSHRRSAKKEAEAKAATGGEA</sequence>
<evidence type="ECO:0000255" key="1">
    <source>
        <dbReference type="HAMAP-Rule" id="MF_00385"/>
    </source>
</evidence>
<evidence type="ECO:0000256" key="2">
    <source>
        <dbReference type="SAM" id="MobiDB-lite"/>
    </source>
</evidence>
<evidence type="ECO:0000305" key="3"/>
<name>RS16_PELPB</name>
<feature type="chain" id="PRO_1000196450" description="Small ribosomal subunit protein bS16">
    <location>
        <begin position="1"/>
        <end position="136"/>
    </location>
</feature>
<feature type="region of interest" description="Disordered" evidence="2">
    <location>
        <begin position="113"/>
        <end position="136"/>
    </location>
</feature>
<feature type="compositionally biased region" description="Basic residues" evidence="2">
    <location>
        <begin position="113"/>
        <end position="122"/>
    </location>
</feature>
<keyword id="KW-1185">Reference proteome</keyword>
<keyword id="KW-0687">Ribonucleoprotein</keyword>
<keyword id="KW-0689">Ribosomal protein</keyword>
<accession>B4SA46</accession>
<organism>
    <name type="scientific">Pelodictyon phaeoclathratiforme (strain DSM 5477 / BU-1)</name>
    <dbReference type="NCBI Taxonomy" id="324925"/>
    <lineage>
        <taxon>Bacteria</taxon>
        <taxon>Pseudomonadati</taxon>
        <taxon>Chlorobiota</taxon>
        <taxon>Chlorobiia</taxon>
        <taxon>Chlorobiales</taxon>
        <taxon>Chlorobiaceae</taxon>
        <taxon>Chlorobium/Pelodictyon group</taxon>
        <taxon>Pelodictyon</taxon>
    </lineage>
</organism>
<dbReference type="EMBL" id="CP001110">
    <property type="protein sequence ID" value="ACF43742.1"/>
    <property type="molecule type" value="Genomic_DNA"/>
</dbReference>
<dbReference type="RefSeq" id="WP_012508230.1">
    <property type="nucleotide sequence ID" value="NC_011060.1"/>
</dbReference>
<dbReference type="SMR" id="B4SA46"/>
<dbReference type="STRING" id="324925.Ppha_1492"/>
<dbReference type="KEGG" id="pph:Ppha_1492"/>
<dbReference type="eggNOG" id="COG0228">
    <property type="taxonomic scope" value="Bacteria"/>
</dbReference>
<dbReference type="HOGENOM" id="CLU_100590_3_2_10"/>
<dbReference type="OrthoDB" id="9807878at2"/>
<dbReference type="Proteomes" id="UP000002724">
    <property type="component" value="Chromosome"/>
</dbReference>
<dbReference type="GO" id="GO:0005737">
    <property type="term" value="C:cytoplasm"/>
    <property type="evidence" value="ECO:0007669"/>
    <property type="project" value="UniProtKB-ARBA"/>
</dbReference>
<dbReference type="GO" id="GO:0015935">
    <property type="term" value="C:small ribosomal subunit"/>
    <property type="evidence" value="ECO:0007669"/>
    <property type="project" value="TreeGrafter"/>
</dbReference>
<dbReference type="GO" id="GO:0003735">
    <property type="term" value="F:structural constituent of ribosome"/>
    <property type="evidence" value="ECO:0007669"/>
    <property type="project" value="InterPro"/>
</dbReference>
<dbReference type="GO" id="GO:0006412">
    <property type="term" value="P:translation"/>
    <property type="evidence" value="ECO:0007669"/>
    <property type="project" value="UniProtKB-UniRule"/>
</dbReference>
<dbReference type="Gene3D" id="3.30.1320.10">
    <property type="match status" value="1"/>
</dbReference>
<dbReference type="HAMAP" id="MF_00385">
    <property type="entry name" value="Ribosomal_bS16"/>
    <property type="match status" value="1"/>
</dbReference>
<dbReference type="InterPro" id="IPR000307">
    <property type="entry name" value="Ribosomal_bS16"/>
</dbReference>
<dbReference type="InterPro" id="IPR020592">
    <property type="entry name" value="Ribosomal_bS16_CS"/>
</dbReference>
<dbReference type="InterPro" id="IPR023803">
    <property type="entry name" value="Ribosomal_bS16_dom_sf"/>
</dbReference>
<dbReference type="NCBIfam" id="TIGR00002">
    <property type="entry name" value="S16"/>
    <property type="match status" value="1"/>
</dbReference>
<dbReference type="PANTHER" id="PTHR12919">
    <property type="entry name" value="30S RIBOSOMAL PROTEIN S16"/>
    <property type="match status" value="1"/>
</dbReference>
<dbReference type="PANTHER" id="PTHR12919:SF20">
    <property type="entry name" value="SMALL RIBOSOMAL SUBUNIT PROTEIN BS16M"/>
    <property type="match status" value="1"/>
</dbReference>
<dbReference type="Pfam" id="PF00886">
    <property type="entry name" value="Ribosomal_S16"/>
    <property type="match status" value="1"/>
</dbReference>
<dbReference type="SUPFAM" id="SSF54565">
    <property type="entry name" value="Ribosomal protein S16"/>
    <property type="match status" value="1"/>
</dbReference>
<dbReference type="PROSITE" id="PS00732">
    <property type="entry name" value="RIBOSOMAL_S16"/>
    <property type="match status" value="1"/>
</dbReference>
<comment type="similarity">
    <text evidence="1">Belongs to the bacterial ribosomal protein bS16 family.</text>
</comment>
<gene>
    <name evidence="1" type="primary">rpsP</name>
    <name type="ordered locus">Ppha_1492</name>
</gene>
<reference key="1">
    <citation type="submission" date="2008-06" db="EMBL/GenBank/DDBJ databases">
        <title>Complete sequence of Pelodictyon phaeoclathratiforme BU-1.</title>
        <authorList>
            <consortium name="US DOE Joint Genome Institute"/>
            <person name="Lucas S."/>
            <person name="Copeland A."/>
            <person name="Lapidus A."/>
            <person name="Glavina del Rio T."/>
            <person name="Dalin E."/>
            <person name="Tice H."/>
            <person name="Bruce D."/>
            <person name="Goodwin L."/>
            <person name="Pitluck S."/>
            <person name="Schmutz J."/>
            <person name="Larimer F."/>
            <person name="Land M."/>
            <person name="Hauser L."/>
            <person name="Kyrpides N."/>
            <person name="Mikhailova N."/>
            <person name="Liu Z."/>
            <person name="Li T."/>
            <person name="Zhao F."/>
            <person name="Overmann J."/>
            <person name="Bryant D.A."/>
            <person name="Richardson P."/>
        </authorList>
    </citation>
    <scope>NUCLEOTIDE SEQUENCE [LARGE SCALE GENOMIC DNA]</scope>
    <source>
        <strain>DSM 5477 / BU-1</strain>
    </source>
</reference>
<protein>
    <recommendedName>
        <fullName evidence="1">Small ribosomal subunit protein bS16</fullName>
    </recommendedName>
    <alternativeName>
        <fullName evidence="3">30S ribosomal protein S16</fullName>
    </alternativeName>
</protein>
<proteinExistence type="inferred from homology"/>